<organism>
    <name type="scientific">Escherichia coli (strain ATCC 8739 / DSM 1576 / NBRC 3972 / NCIMB 8545 / WDCM 00012 / Crooks)</name>
    <dbReference type="NCBI Taxonomy" id="481805"/>
    <lineage>
        <taxon>Bacteria</taxon>
        <taxon>Pseudomonadati</taxon>
        <taxon>Pseudomonadota</taxon>
        <taxon>Gammaproteobacteria</taxon>
        <taxon>Enterobacterales</taxon>
        <taxon>Enterobacteriaceae</taxon>
        <taxon>Escherichia</taxon>
    </lineage>
</organism>
<name>UBIB_ECOLC</name>
<comment type="function">
    <text evidence="1">Is probably a protein kinase regulator of UbiI activity which is involved in aerobic coenzyme Q (ubiquinone) biosynthesis.</text>
</comment>
<comment type="pathway">
    <text>Cofactor biosynthesis; ubiquinone biosynthesis [regulation].</text>
</comment>
<comment type="subcellular location">
    <subcellularLocation>
        <location evidence="1">Cell inner membrane</location>
        <topology evidence="1">Multi-pass membrane protein</topology>
    </subcellularLocation>
</comment>
<comment type="similarity">
    <text evidence="1">Belongs to the ABC1 family. UbiB subfamily.</text>
</comment>
<proteinExistence type="inferred from homology"/>
<reference key="1">
    <citation type="submission" date="2008-02" db="EMBL/GenBank/DDBJ databases">
        <title>Complete sequence of Escherichia coli C str. ATCC 8739.</title>
        <authorList>
            <person name="Copeland A."/>
            <person name="Lucas S."/>
            <person name="Lapidus A."/>
            <person name="Glavina del Rio T."/>
            <person name="Dalin E."/>
            <person name="Tice H."/>
            <person name="Bruce D."/>
            <person name="Goodwin L."/>
            <person name="Pitluck S."/>
            <person name="Kiss H."/>
            <person name="Brettin T."/>
            <person name="Detter J.C."/>
            <person name="Han C."/>
            <person name="Kuske C.R."/>
            <person name="Schmutz J."/>
            <person name="Larimer F."/>
            <person name="Land M."/>
            <person name="Hauser L."/>
            <person name="Kyrpides N."/>
            <person name="Mikhailova N."/>
            <person name="Ingram L."/>
            <person name="Richardson P."/>
        </authorList>
    </citation>
    <scope>NUCLEOTIDE SEQUENCE [LARGE SCALE GENOMIC DNA]</scope>
    <source>
        <strain>ATCC 8739 / DSM 1576 / NBRC 3972 / NCIMB 8545 / WDCM 00012 / Crooks</strain>
    </source>
</reference>
<evidence type="ECO:0000255" key="1">
    <source>
        <dbReference type="HAMAP-Rule" id="MF_00414"/>
    </source>
</evidence>
<sequence>MTPGEVRRLYFIIRTFLSYGLDELIPKMRITLPLRLWRYSLFWMPNRHKDKLLGERLRLALQELGPVWIKFGQMLSTRRDLFPPHIADQLALLQDKVAPFDGKLAKQQIEAAMGGLPVEAWFDDFEIKPLASASIAQVHTARLKSNGKEVVIKVIRPDILPVIKADLKLIYRLARWVPRLLPDGRRLRPTEVVREYEKTLIDELNLLRESANAIQLRRNFEDSPMLYIPEVYPDYCSEGMMVMERIYGIPVSDVAALEKNGTNMKLLAERGVQVFFTQVFRDSFFHADMHPGNIFVSYEHPENPKYIGIDCGIVGSLNKEDKRYLAENFIAFFNRDYRKVAELHVDSGWVPPDTNVEEFEFAIRTVCEPIFEKPLAEISFGHVLLNLFNTARRFNMEVQPQLVLLQKTLLYVEGVGRQLYPQLDLWKTAKPFLESWIKDQVGIPALVRAFKEKAPFWVEKMPELPELVYDSLRQGKYLQHSVDKIARELQSNHVRQGQSRYFLGIGATLVLSGTFLLVSRPEWGLMPGWLMAGGLIAWFVGWRKTR</sequence>
<protein>
    <recommendedName>
        <fullName evidence="1">Probable protein kinase UbiB</fullName>
        <ecNumber evidence="1">2.7.-.-</ecNumber>
    </recommendedName>
    <alternativeName>
        <fullName evidence="1">Ubiquinone biosynthesis protein UbiB</fullName>
    </alternativeName>
</protein>
<accession>B1IW70</accession>
<keyword id="KW-0067">ATP-binding</keyword>
<keyword id="KW-0997">Cell inner membrane</keyword>
<keyword id="KW-1003">Cell membrane</keyword>
<keyword id="KW-0418">Kinase</keyword>
<keyword id="KW-0472">Membrane</keyword>
<keyword id="KW-0547">Nucleotide-binding</keyword>
<keyword id="KW-0808">Transferase</keyword>
<keyword id="KW-0812">Transmembrane</keyword>
<keyword id="KW-1133">Transmembrane helix</keyword>
<keyword id="KW-0831">Ubiquinone biosynthesis</keyword>
<dbReference type="EC" id="2.7.-.-" evidence="1"/>
<dbReference type="EMBL" id="CP000946">
    <property type="protein sequence ID" value="ACA79770.1"/>
    <property type="molecule type" value="Genomic_DNA"/>
</dbReference>
<dbReference type="RefSeq" id="WP_000187530.1">
    <property type="nucleotide sequence ID" value="NZ_MTFT01000015.1"/>
</dbReference>
<dbReference type="SMR" id="B1IW70"/>
<dbReference type="GeneID" id="75204829"/>
<dbReference type="KEGG" id="ecl:EcolC_4173"/>
<dbReference type="HOGENOM" id="CLU_006533_0_0_6"/>
<dbReference type="UniPathway" id="UPA00232"/>
<dbReference type="GO" id="GO:0005886">
    <property type="term" value="C:plasma membrane"/>
    <property type="evidence" value="ECO:0007669"/>
    <property type="project" value="UniProtKB-SubCell"/>
</dbReference>
<dbReference type="GO" id="GO:0005524">
    <property type="term" value="F:ATP binding"/>
    <property type="evidence" value="ECO:0007669"/>
    <property type="project" value="UniProtKB-KW"/>
</dbReference>
<dbReference type="GO" id="GO:0004672">
    <property type="term" value="F:protein kinase activity"/>
    <property type="evidence" value="ECO:0007669"/>
    <property type="project" value="UniProtKB-UniRule"/>
</dbReference>
<dbReference type="GO" id="GO:0010795">
    <property type="term" value="P:regulation of ubiquinone biosynthetic process"/>
    <property type="evidence" value="ECO:0007669"/>
    <property type="project" value="UniProtKB-UniRule"/>
</dbReference>
<dbReference type="GO" id="GO:0006744">
    <property type="term" value="P:ubiquinone biosynthetic process"/>
    <property type="evidence" value="ECO:0007669"/>
    <property type="project" value="UniProtKB-UniPathway"/>
</dbReference>
<dbReference type="CDD" id="cd13972">
    <property type="entry name" value="UbiB"/>
    <property type="match status" value="1"/>
</dbReference>
<dbReference type="HAMAP" id="MF_00414">
    <property type="entry name" value="UbiB"/>
    <property type="match status" value="1"/>
</dbReference>
<dbReference type="InterPro" id="IPR004147">
    <property type="entry name" value="ABC1_dom"/>
</dbReference>
<dbReference type="InterPro" id="IPR011009">
    <property type="entry name" value="Kinase-like_dom_sf"/>
</dbReference>
<dbReference type="InterPro" id="IPR010232">
    <property type="entry name" value="UbiB"/>
</dbReference>
<dbReference type="InterPro" id="IPR045308">
    <property type="entry name" value="UbiB_bact"/>
</dbReference>
<dbReference type="InterPro" id="IPR050154">
    <property type="entry name" value="UbiB_kinase"/>
</dbReference>
<dbReference type="NCBIfam" id="NF003404">
    <property type="entry name" value="PRK04750.1"/>
    <property type="match status" value="1"/>
</dbReference>
<dbReference type="NCBIfam" id="TIGR01982">
    <property type="entry name" value="UbiB"/>
    <property type="match status" value="1"/>
</dbReference>
<dbReference type="PANTHER" id="PTHR10566">
    <property type="entry name" value="CHAPERONE-ACTIVITY OF BC1 COMPLEX CABC1 -RELATED"/>
    <property type="match status" value="1"/>
</dbReference>
<dbReference type="PANTHER" id="PTHR10566:SF113">
    <property type="entry name" value="PROTEIN ACTIVITY OF BC1 COMPLEX KINASE 7, CHLOROPLASTIC"/>
    <property type="match status" value="1"/>
</dbReference>
<dbReference type="Pfam" id="PF03109">
    <property type="entry name" value="ABC1"/>
    <property type="match status" value="1"/>
</dbReference>
<dbReference type="SUPFAM" id="SSF56112">
    <property type="entry name" value="Protein kinase-like (PK-like)"/>
    <property type="match status" value="1"/>
</dbReference>
<gene>
    <name evidence="1" type="primary">ubiB</name>
    <name type="ordered locus">EcolC_4173</name>
</gene>
<feature type="chain" id="PRO_1000080501" description="Probable protein kinase UbiB">
    <location>
        <begin position="1"/>
        <end position="546"/>
    </location>
</feature>
<feature type="transmembrane region" description="Helical" evidence="1">
    <location>
        <begin position="501"/>
        <end position="521"/>
    </location>
</feature>
<feature type="transmembrane region" description="Helical" evidence="1">
    <location>
        <begin position="522"/>
        <end position="542"/>
    </location>
</feature>
<feature type="domain" description="Protein kinase" evidence="1">
    <location>
        <begin position="124"/>
        <end position="502"/>
    </location>
</feature>
<feature type="active site" description="Proton acceptor" evidence="1">
    <location>
        <position position="288"/>
    </location>
</feature>
<feature type="binding site" evidence="1">
    <location>
        <begin position="130"/>
        <end position="138"/>
    </location>
    <ligand>
        <name>ATP</name>
        <dbReference type="ChEBI" id="CHEBI:30616"/>
    </ligand>
</feature>
<feature type="binding site" evidence="1">
    <location>
        <position position="153"/>
    </location>
    <ligand>
        <name>ATP</name>
        <dbReference type="ChEBI" id="CHEBI:30616"/>
    </ligand>
</feature>